<proteinExistence type="inferred from homology"/>
<evidence type="ECO:0000255" key="1">
    <source>
        <dbReference type="HAMAP-Rule" id="MF_00158"/>
    </source>
</evidence>
<name>PANC_ECOK1</name>
<gene>
    <name evidence="1" type="primary">panC</name>
    <name type="ordered locus">Ecok1_01250</name>
    <name type="ORF">APECO1_1852</name>
</gene>
<organism>
    <name type="scientific">Escherichia coli O1:K1 / APEC</name>
    <dbReference type="NCBI Taxonomy" id="405955"/>
    <lineage>
        <taxon>Bacteria</taxon>
        <taxon>Pseudomonadati</taxon>
        <taxon>Pseudomonadota</taxon>
        <taxon>Gammaproteobacteria</taxon>
        <taxon>Enterobacterales</taxon>
        <taxon>Enterobacteriaceae</taxon>
        <taxon>Escherichia</taxon>
    </lineage>
</organism>
<protein>
    <recommendedName>
        <fullName evidence="1">Pantothenate synthetase</fullName>
        <shortName evidence="1">PS</shortName>
        <ecNumber evidence="1">6.3.2.1</ecNumber>
    </recommendedName>
    <alternativeName>
        <fullName evidence="1">Pantoate--beta-alanine ligase</fullName>
    </alternativeName>
    <alternativeName>
        <fullName evidence="1">Pantoate-activating enzyme</fullName>
    </alternativeName>
</protein>
<sequence length="283" mass="31579">MLIIETLPLLRQQIRRLRMEGKRVALVPTMGNLHDGHMKLVDEAKARADVVVVSIFVNPMQFDRPEDLARYPRTLQEDCEKLNKRKVDLVFAPSVKEIYPNGTETHTYVDVPGLSTMLEGASRPGHFRGVSTIVSKLFNLVQPDIACFGEKDFQQLALIRKMVADMGFDIEIVGVPIMRAKDGLALSSRNGYLTAEQRKIAPGLYKVLSSIADKLQAGERDLDEIIAIAGQELNEKGFRSDDIQIRDADTLLEVSENSKRAVILVAAWLGDARLIDNKLVELA</sequence>
<accession>A1A7H9</accession>
<comment type="function">
    <text evidence="1">Catalyzes the condensation of pantoate with beta-alanine in an ATP-dependent reaction via a pantoyl-adenylate intermediate.</text>
</comment>
<comment type="catalytic activity">
    <reaction evidence="1">
        <text>(R)-pantoate + beta-alanine + ATP = (R)-pantothenate + AMP + diphosphate + H(+)</text>
        <dbReference type="Rhea" id="RHEA:10912"/>
        <dbReference type="ChEBI" id="CHEBI:15378"/>
        <dbReference type="ChEBI" id="CHEBI:15980"/>
        <dbReference type="ChEBI" id="CHEBI:29032"/>
        <dbReference type="ChEBI" id="CHEBI:30616"/>
        <dbReference type="ChEBI" id="CHEBI:33019"/>
        <dbReference type="ChEBI" id="CHEBI:57966"/>
        <dbReference type="ChEBI" id="CHEBI:456215"/>
        <dbReference type="EC" id="6.3.2.1"/>
    </reaction>
</comment>
<comment type="pathway">
    <text evidence="1">Cofactor biosynthesis; (R)-pantothenate biosynthesis; (R)-pantothenate from (R)-pantoate and beta-alanine: step 1/1.</text>
</comment>
<comment type="subunit">
    <text evidence="1">Homodimer.</text>
</comment>
<comment type="subcellular location">
    <subcellularLocation>
        <location evidence="1">Cytoplasm</location>
    </subcellularLocation>
</comment>
<comment type="miscellaneous">
    <text evidence="1">The reaction proceeds by a bi uni uni bi ping pong mechanism.</text>
</comment>
<comment type="similarity">
    <text evidence="1">Belongs to the pantothenate synthetase family.</text>
</comment>
<feature type="chain" id="PRO_0000305444" description="Pantothenate synthetase">
    <location>
        <begin position="1"/>
        <end position="283"/>
    </location>
</feature>
<feature type="active site" description="Proton donor" evidence="1">
    <location>
        <position position="37"/>
    </location>
</feature>
<feature type="binding site" evidence="1">
    <location>
        <begin position="30"/>
        <end position="37"/>
    </location>
    <ligand>
        <name>ATP</name>
        <dbReference type="ChEBI" id="CHEBI:30616"/>
    </ligand>
</feature>
<feature type="binding site" evidence="1">
    <location>
        <position position="61"/>
    </location>
    <ligand>
        <name>(R)-pantoate</name>
        <dbReference type="ChEBI" id="CHEBI:15980"/>
    </ligand>
</feature>
<feature type="binding site" evidence="1">
    <location>
        <position position="61"/>
    </location>
    <ligand>
        <name>beta-alanine</name>
        <dbReference type="ChEBI" id="CHEBI:57966"/>
    </ligand>
</feature>
<feature type="binding site" evidence="1">
    <location>
        <begin position="149"/>
        <end position="152"/>
    </location>
    <ligand>
        <name>ATP</name>
        <dbReference type="ChEBI" id="CHEBI:30616"/>
    </ligand>
</feature>
<feature type="binding site" evidence="1">
    <location>
        <position position="155"/>
    </location>
    <ligand>
        <name>(R)-pantoate</name>
        <dbReference type="ChEBI" id="CHEBI:15980"/>
    </ligand>
</feature>
<feature type="binding site" evidence="1">
    <location>
        <begin position="186"/>
        <end position="189"/>
    </location>
    <ligand>
        <name>ATP</name>
        <dbReference type="ChEBI" id="CHEBI:30616"/>
    </ligand>
</feature>
<keyword id="KW-0067">ATP-binding</keyword>
<keyword id="KW-0963">Cytoplasm</keyword>
<keyword id="KW-0436">Ligase</keyword>
<keyword id="KW-0547">Nucleotide-binding</keyword>
<keyword id="KW-0566">Pantothenate biosynthesis</keyword>
<keyword id="KW-1185">Reference proteome</keyword>
<reference key="1">
    <citation type="journal article" date="2007" name="J. Bacteriol.">
        <title>The genome sequence of avian pathogenic Escherichia coli strain O1:K1:H7 shares strong similarities with human extraintestinal pathogenic E. coli genomes.</title>
        <authorList>
            <person name="Johnson T.J."/>
            <person name="Kariyawasam S."/>
            <person name="Wannemuehler Y."/>
            <person name="Mangiamele P."/>
            <person name="Johnson S.J."/>
            <person name="Doetkott C."/>
            <person name="Skyberg J.A."/>
            <person name="Lynne A.M."/>
            <person name="Johnson J.R."/>
            <person name="Nolan L.K."/>
        </authorList>
    </citation>
    <scope>NUCLEOTIDE SEQUENCE [LARGE SCALE GENOMIC DNA]</scope>
</reference>
<dbReference type="EC" id="6.3.2.1" evidence="1"/>
<dbReference type="EMBL" id="CP000468">
    <property type="protein sequence ID" value="ABI99618.1"/>
    <property type="molecule type" value="Genomic_DNA"/>
</dbReference>
<dbReference type="RefSeq" id="WP_000905380.1">
    <property type="nucleotide sequence ID" value="NZ_CADILS010000047.1"/>
</dbReference>
<dbReference type="BMRB" id="A1A7H9"/>
<dbReference type="SMR" id="A1A7H9"/>
<dbReference type="KEGG" id="ecv:APECO1_1852"/>
<dbReference type="HOGENOM" id="CLU_047148_0_0_6"/>
<dbReference type="UniPathway" id="UPA00028">
    <property type="reaction ID" value="UER00005"/>
</dbReference>
<dbReference type="Proteomes" id="UP000008216">
    <property type="component" value="Chromosome"/>
</dbReference>
<dbReference type="GO" id="GO:0005829">
    <property type="term" value="C:cytosol"/>
    <property type="evidence" value="ECO:0007669"/>
    <property type="project" value="TreeGrafter"/>
</dbReference>
<dbReference type="GO" id="GO:0005524">
    <property type="term" value="F:ATP binding"/>
    <property type="evidence" value="ECO:0007669"/>
    <property type="project" value="UniProtKB-KW"/>
</dbReference>
<dbReference type="GO" id="GO:0004592">
    <property type="term" value="F:pantoate-beta-alanine ligase activity"/>
    <property type="evidence" value="ECO:0007669"/>
    <property type="project" value="UniProtKB-UniRule"/>
</dbReference>
<dbReference type="GO" id="GO:0015940">
    <property type="term" value="P:pantothenate biosynthetic process"/>
    <property type="evidence" value="ECO:0007669"/>
    <property type="project" value="UniProtKB-UniRule"/>
</dbReference>
<dbReference type="CDD" id="cd00560">
    <property type="entry name" value="PanC"/>
    <property type="match status" value="1"/>
</dbReference>
<dbReference type="FunFam" id="3.30.1300.10:FF:000001">
    <property type="entry name" value="Pantothenate synthetase"/>
    <property type="match status" value="1"/>
</dbReference>
<dbReference type="FunFam" id="3.40.50.620:FF:000013">
    <property type="entry name" value="Pantothenate synthetase"/>
    <property type="match status" value="1"/>
</dbReference>
<dbReference type="Gene3D" id="3.40.50.620">
    <property type="entry name" value="HUPs"/>
    <property type="match status" value="1"/>
</dbReference>
<dbReference type="Gene3D" id="3.30.1300.10">
    <property type="entry name" value="Pantoate-beta-alanine ligase, C-terminal domain"/>
    <property type="match status" value="1"/>
</dbReference>
<dbReference type="HAMAP" id="MF_00158">
    <property type="entry name" value="PanC"/>
    <property type="match status" value="1"/>
</dbReference>
<dbReference type="InterPro" id="IPR004821">
    <property type="entry name" value="Cyt_trans-like"/>
</dbReference>
<dbReference type="InterPro" id="IPR003721">
    <property type="entry name" value="Pantoate_ligase"/>
</dbReference>
<dbReference type="InterPro" id="IPR042176">
    <property type="entry name" value="Pantoate_ligase_C"/>
</dbReference>
<dbReference type="InterPro" id="IPR014729">
    <property type="entry name" value="Rossmann-like_a/b/a_fold"/>
</dbReference>
<dbReference type="NCBIfam" id="TIGR00125">
    <property type="entry name" value="cyt_tran_rel"/>
    <property type="match status" value="1"/>
</dbReference>
<dbReference type="NCBIfam" id="TIGR00018">
    <property type="entry name" value="panC"/>
    <property type="match status" value="1"/>
</dbReference>
<dbReference type="PANTHER" id="PTHR21299">
    <property type="entry name" value="CYTIDYLATE KINASE/PANTOATE-BETA-ALANINE LIGASE"/>
    <property type="match status" value="1"/>
</dbReference>
<dbReference type="PANTHER" id="PTHR21299:SF1">
    <property type="entry name" value="PANTOATE--BETA-ALANINE LIGASE"/>
    <property type="match status" value="1"/>
</dbReference>
<dbReference type="Pfam" id="PF02569">
    <property type="entry name" value="Pantoate_ligase"/>
    <property type="match status" value="1"/>
</dbReference>
<dbReference type="SUPFAM" id="SSF52374">
    <property type="entry name" value="Nucleotidylyl transferase"/>
    <property type="match status" value="1"/>
</dbReference>